<name>CPDA_HAEIN</name>
<sequence>MKNTFVYQAEKPVIKLLQITDPHLFKDESAELLGVNTQASFAQVLKEIQQENNEFDVILATGDLVQDSSDEGYIRFVEMMKPFNKPVFWIPGNHDFQPKMAEFLNQPPMNAAKHLLLGEHWQALLLDSQVYGVPHGQLSQHQLDLLKETLGKNPERYTLVVLHHHLLPTNSAWLDQHNLRNSHELAEVLAPFTNVKAILYGHIHQEVNSEWNGYQVMATPATCIQFKPDCQYFSLDTLQPGWREIELHSDGSIRTEVKRIQQAEFFPNMQEEGY</sequence>
<organism>
    <name type="scientific">Haemophilus influenzae (strain ATCC 51907 / DSM 11121 / KW20 / Rd)</name>
    <dbReference type="NCBI Taxonomy" id="71421"/>
    <lineage>
        <taxon>Bacteria</taxon>
        <taxon>Pseudomonadati</taxon>
        <taxon>Pseudomonadota</taxon>
        <taxon>Gammaproteobacteria</taxon>
        <taxon>Pasteurellales</taxon>
        <taxon>Pasteurellaceae</taxon>
        <taxon>Haemophilus</taxon>
    </lineage>
</organism>
<dbReference type="EC" id="3.1.4.53" evidence="1"/>
<dbReference type="EMBL" id="L42023">
    <property type="protein sequence ID" value="AAC22058.1"/>
    <property type="molecule type" value="Genomic_DNA"/>
</dbReference>
<dbReference type="PIR" id="E64065">
    <property type="entry name" value="E64065"/>
</dbReference>
<dbReference type="RefSeq" id="NP_438561.1">
    <property type="nucleotide sequence ID" value="NC_000907.1"/>
</dbReference>
<dbReference type="SMR" id="P44685"/>
<dbReference type="STRING" id="71421.HI_0399"/>
<dbReference type="DNASU" id="949501"/>
<dbReference type="EnsemblBacteria" id="AAC22058">
    <property type="protein sequence ID" value="AAC22058"/>
    <property type="gene ID" value="HI_0399"/>
</dbReference>
<dbReference type="KEGG" id="hin:HI_0399"/>
<dbReference type="PATRIC" id="fig|71421.8.peg.418"/>
<dbReference type="eggNOG" id="COG1409">
    <property type="taxonomic scope" value="Bacteria"/>
</dbReference>
<dbReference type="HOGENOM" id="CLU_070320_0_0_6"/>
<dbReference type="OrthoDB" id="9784378at2"/>
<dbReference type="PhylomeDB" id="P44685"/>
<dbReference type="BioCyc" id="HINF71421:G1GJ1-414-MONOMER"/>
<dbReference type="Proteomes" id="UP000000579">
    <property type="component" value="Chromosome"/>
</dbReference>
<dbReference type="GO" id="GO:0004115">
    <property type="term" value="F:3',5'-cyclic-AMP phosphodiesterase activity"/>
    <property type="evidence" value="ECO:0007669"/>
    <property type="project" value="UniProtKB-UniRule"/>
</dbReference>
<dbReference type="GO" id="GO:0046872">
    <property type="term" value="F:metal ion binding"/>
    <property type="evidence" value="ECO:0007669"/>
    <property type="project" value="UniProtKB-UniRule"/>
</dbReference>
<dbReference type="GO" id="GO:0000166">
    <property type="term" value="F:nucleotide binding"/>
    <property type="evidence" value="ECO:0007669"/>
    <property type="project" value="UniProtKB-UniRule"/>
</dbReference>
<dbReference type="CDD" id="cd07402">
    <property type="entry name" value="MPP_GpdQ"/>
    <property type="match status" value="1"/>
</dbReference>
<dbReference type="FunFam" id="3.60.21.10:FF:000014">
    <property type="entry name" value="3',5'-cyclic adenosine monophosphate phosphodiesterase CpdA"/>
    <property type="match status" value="1"/>
</dbReference>
<dbReference type="Gene3D" id="3.60.21.10">
    <property type="match status" value="1"/>
</dbReference>
<dbReference type="HAMAP" id="MF_00905">
    <property type="entry name" value="cAMP_phosphodiest_CpdA"/>
    <property type="match status" value="1"/>
</dbReference>
<dbReference type="InterPro" id="IPR004843">
    <property type="entry name" value="Calcineurin-like_PHP_ApaH"/>
</dbReference>
<dbReference type="InterPro" id="IPR046379">
    <property type="entry name" value="cAMP_phosphodiest_CpdA"/>
</dbReference>
<dbReference type="InterPro" id="IPR050884">
    <property type="entry name" value="CNP_phosphodiesterase-III"/>
</dbReference>
<dbReference type="InterPro" id="IPR026575">
    <property type="entry name" value="GpdQ/CpdA-like"/>
</dbReference>
<dbReference type="InterPro" id="IPR029052">
    <property type="entry name" value="Metallo-depent_PP-like"/>
</dbReference>
<dbReference type="NCBIfam" id="NF008359">
    <property type="entry name" value="PRK11148.1"/>
    <property type="match status" value="1"/>
</dbReference>
<dbReference type="PANTHER" id="PTHR42988:SF2">
    <property type="entry name" value="CYCLIC NUCLEOTIDE PHOSPHODIESTERASE CBUA0032-RELATED"/>
    <property type="match status" value="1"/>
</dbReference>
<dbReference type="PANTHER" id="PTHR42988">
    <property type="entry name" value="PHOSPHOHYDROLASE"/>
    <property type="match status" value="1"/>
</dbReference>
<dbReference type="Pfam" id="PF00149">
    <property type="entry name" value="Metallophos"/>
    <property type="match status" value="1"/>
</dbReference>
<dbReference type="SUPFAM" id="SSF56300">
    <property type="entry name" value="Metallo-dependent phosphatases"/>
    <property type="match status" value="1"/>
</dbReference>
<comment type="function">
    <text evidence="1 2">Hydrolyzes cAMP to 5'-AMP. Plays an important regulatory role in modulating the intracellular concentration of cAMP, thereby influencing cAMP-dependent processes. May coordinate responses to nutritional stress, ensuring optimal competence development.</text>
</comment>
<comment type="catalytic activity">
    <reaction evidence="1">
        <text>3',5'-cyclic AMP + H2O = AMP + H(+)</text>
        <dbReference type="Rhea" id="RHEA:25277"/>
        <dbReference type="ChEBI" id="CHEBI:15377"/>
        <dbReference type="ChEBI" id="CHEBI:15378"/>
        <dbReference type="ChEBI" id="CHEBI:58165"/>
        <dbReference type="ChEBI" id="CHEBI:456215"/>
        <dbReference type="EC" id="3.1.4.53"/>
    </reaction>
</comment>
<comment type="cofactor">
    <cofactor evidence="1">
        <name>Fe(2+)</name>
        <dbReference type="ChEBI" id="CHEBI:29033"/>
    </cofactor>
    <text evidence="1">Binds 2 Fe(2+) ions per subunit.</text>
</comment>
<comment type="disruption phenotype">
    <text evidence="2">Mutants show increased levels of cellular cAMP.</text>
</comment>
<comment type="similarity">
    <text evidence="1">Belongs to the cyclic nucleotide phosphodiesterase class-III family.</text>
</comment>
<gene>
    <name evidence="1" type="primary">cpdA</name>
    <name type="synonym">icc</name>
    <name type="ordered locus">HI_0399</name>
</gene>
<evidence type="ECO:0000255" key="1">
    <source>
        <dbReference type="HAMAP-Rule" id="MF_00905"/>
    </source>
</evidence>
<evidence type="ECO:0000269" key="2">
    <source>
    </source>
</evidence>
<proteinExistence type="inferred from homology"/>
<feature type="chain" id="PRO_0000084148" description="3',5'-cyclic adenosine monophosphate phosphodiesterase CpdA">
    <location>
        <begin position="1"/>
        <end position="274"/>
    </location>
</feature>
<feature type="binding site" evidence="1">
    <location>
        <position position="21"/>
    </location>
    <ligand>
        <name>Fe cation</name>
        <dbReference type="ChEBI" id="CHEBI:24875"/>
        <label>1</label>
    </ligand>
</feature>
<feature type="binding site" evidence="1">
    <location>
        <position position="23"/>
    </location>
    <ligand>
        <name>AMP</name>
        <dbReference type="ChEBI" id="CHEBI:456215"/>
    </ligand>
</feature>
<feature type="binding site" evidence="1">
    <location>
        <position position="23"/>
    </location>
    <ligand>
        <name>Fe cation</name>
        <dbReference type="ChEBI" id="CHEBI:24875"/>
        <label>1</label>
    </ligand>
</feature>
<feature type="binding site" evidence="1">
    <location>
        <position position="63"/>
    </location>
    <ligand>
        <name>AMP</name>
        <dbReference type="ChEBI" id="CHEBI:456215"/>
    </ligand>
</feature>
<feature type="binding site" evidence="1">
    <location>
        <position position="63"/>
    </location>
    <ligand>
        <name>Fe cation</name>
        <dbReference type="ChEBI" id="CHEBI:24875"/>
        <label>1</label>
    </ligand>
</feature>
<feature type="binding site" evidence="1">
    <location>
        <position position="63"/>
    </location>
    <ligand>
        <name>Fe cation</name>
        <dbReference type="ChEBI" id="CHEBI:24875"/>
        <label>2</label>
    </ligand>
</feature>
<feature type="binding site" evidence="1">
    <location>
        <begin position="93"/>
        <end position="94"/>
    </location>
    <ligand>
        <name>AMP</name>
        <dbReference type="ChEBI" id="CHEBI:456215"/>
    </ligand>
</feature>
<feature type="binding site" evidence="1">
    <location>
        <position position="93"/>
    </location>
    <ligand>
        <name>Fe cation</name>
        <dbReference type="ChEBI" id="CHEBI:24875"/>
        <label>2</label>
    </ligand>
</feature>
<feature type="binding site" evidence="1">
    <location>
        <position position="163"/>
    </location>
    <ligand>
        <name>Fe cation</name>
        <dbReference type="ChEBI" id="CHEBI:24875"/>
        <label>2</label>
    </ligand>
</feature>
<feature type="binding site" evidence="1">
    <location>
        <position position="202"/>
    </location>
    <ligand>
        <name>Fe cation</name>
        <dbReference type="ChEBI" id="CHEBI:24875"/>
        <label>2</label>
    </ligand>
</feature>
<feature type="binding site" evidence="1">
    <location>
        <position position="204"/>
    </location>
    <ligand>
        <name>AMP</name>
        <dbReference type="ChEBI" id="CHEBI:456215"/>
    </ligand>
</feature>
<feature type="binding site" evidence="1">
    <location>
        <position position="204"/>
    </location>
    <ligand>
        <name>Fe cation</name>
        <dbReference type="ChEBI" id="CHEBI:24875"/>
        <label>1</label>
    </ligand>
</feature>
<protein>
    <recommendedName>
        <fullName evidence="1">3',5'-cyclic adenosine monophosphate phosphodiesterase CpdA</fullName>
        <shortName evidence="1">3',5'-cyclic AMP phosphodiesterase</shortName>
        <shortName evidence="1">cAMP phosphodiesterase</shortName>
        <ecNumber evidence="1">3.1.4.53</ecNumber>
    </recommendedName>
</protein>
<keyword id="KW-0114">cAMP</keyword>
<keyword id="KW-0378">Hydrolase</keyword>
<keyword id="KW-0408">Iron</keyword>
<keyword id="KW-0479">Metal-binding</keyword>
<keyword id="KW-0547">Nucleotide-binding</keyword>
<keyword id="KW-1185">Reference proteome</keyword>
<accession>P44685</accession>
<reference key="1">
    <citation type="journal article" date="1995" name="Science">
        <title>Whole-genome random sequencing and assembly of Haemophilus influenzae Rd.</title>
        <authorList>
            <person name="Fleischmann R.D."/>
            <person name="Adams M.D."/>
            <person name="White O."/>
            <person name="Clayton R.A."/>
            <person name="Kirkness E.F."/>
            <person name="Kerlavage A.R."/>
            <person name="Bult C.J."/>
            <person name="Tomb J.-F."/>
            <person name="Dougherty B.A."/>
            <person name="Merrick J.M."/>
            <person name="McKenney K."/>
            <person name="Sutton G.G."/>
            <person name="FitzHugh W."/>
            <person name="Fields C.A."/>
            <person name="Gocayne J.D."/>
            <person name="Scott J.D."/>
            <person name="Shirley R."/>
            <person name="Liu L.-I."/>
            <person name="Glodek A."/>
            <person name="Kelley J.M."/>
            <person name="Weidman J.F."/>
            <person name="Phillips C.A."/>
            <person name="Spriggs T."/>
            <person name="Hedblom E."/>
            <person name="Cotton M.D."/>
            <person name="Utterback T.R."/>
            <person name="Hanna M.C."/>
            <person name="Nguyen D.T."/>
            <person name="Saudek D.M."/>
            <person name="Brandon R.C."/>
            <person name="Fine L.D."/>
            <person name="Fritchman J.L."/>
            <person name="Fuhrmann J.L."/>
            <person name="Geoghagen N.S.M."/>
            <person name="Gnehm C.L."/>
            <person name="McDonald L.A."/>
            <person name="Small K.V."/>
            <person name="Fraser C.M."/>
            <person name="Smith H.O."/>
            <person name="Venter J.C."/>
        </authorList>
    </citation>
    <scope>NUCLEOTIDE SEQUENCE [LARGE SCALE GENOMIC DNA]</scope>
    <source>
        <strain>ATCC 51907 / DSM 11121 / KW20 / Rd</strain>
    </source>
</reference>
<reference key="2">
    <citation type="journal article" date="1998" name="J. Bacteriol.">
        <title>A 3',5' cyclic AMP (cAMP) phosphodiesterase modulates cAMP levels and optimizes competence in Haemophilus influenzae Rd.</title>
        <authorList>
            <person name="Macfadyen L.P."/>
            <person name="Ma C."/>
            <person name="Redfield R.J."/>
        </authorList>
    </citation>
    <scope>FUNCTION</scope>
    <scope>DISRUPTION PHENOTYPE</scope>
    <source>
        <strain>ATCC 51907 / DSM 11121 / KW20 / Rd</strain>
    </source>
</reference>